<proteinExistence type="evidence at protein level"/>
<comment type="function">
    <text evidence="1 5">Catalyzes the covalent attachment of ubiquitin to other proteins. Seems to function in the selective degradation of misfolded membrane proteins from the endoplasmic reticulum (ERAD) (PubMed:12082160). In cooperation with the GATOR2 complex, catalyzes 'Lys-6'-linked ubiquitination of NPRL2 (By similarity).</text>
</comment>
<comment type="function">
    <text evidence="4 6">In case of infection by the murid herpesvirus 4, its association with the viral E3 ligase K3 mediates ubiquitination of host surface class I (MHC-I) H-2D(b)/H2-D1 and H-2K(b)/H2-K1 molecules before they exit the endoplasmic reticulum, leading to their degradation by the ERAD system, thus blocking the immune detection of virus-infected cells. The complex formed with the murid herpesvirus 4 protein K3 mediates ubiquitination of lysine, as well as serine and threonine residues present in the cytoplasmic tail of surface class I molecules and promotes ubiquitination of hydroxylated serine or threonine residues via ester bonds instead of the classical isopeptide linkage.</text>
</comment>
<comment type="catalytic activity">
    <reaction evidence="3">
        <text>S-ubiquitinyl-[E1 ubiquitin-activating enzyme]-L-cysteine + [E2 ubiquitin-conjugating enzyme]-L-cysteine = [E1 ubiquitin-activating enzyme]-L-cysteine + S-ubiquitinyl-[E2 ubiquitin-conjugating enzyme]-L-cysteine.</text>
        <dbReference type="EC" id="2.3.2.23"/>
    </reaction>
</comment>
<comment type="pathway">
    <text evidence="3">Protein modification; protein ubiquitination.</text>
</comment>
<comment type="subunit">
    <text evidence="6">Interacts with murid herpesvirus 4 protein K3 (mK3).</text>
</comment>
<comment type="subcellular location">
    <subcellularLocation>
        <location evidence="4 5">Endoplasmic reticulum membrane</location>
        <topology evidence="4 5">Single-pass type IV membrane protein</topology>
    </subcellularLocation>
</comment>
<comment type="similarity">
    <text evidence="3">Belongs to the ubiquitin-conjugating enzyme family.</text>
</comment>
<protein>
    <recommendedName>
        <fullName>Ubiquitin-conjugating enzyme E2 J2</fullName>
        <ecNumber>2.3.2.23</ecNumber>
    </recommendedName>
    <alternativeName>
        <fullName>Non-canonical ubiquitin-conjugating enzyme 2</fullName>
        <shortName>NCUBE-2</shortName>
    </alternativeName>
</protein>
<feature type="chain" id="PRO_0000082597" description="Ubiquitin-conjugating enzyme E2 J2">
    <location>
        <begin position="1"/>
        <end position="259"/>
    </location>
</feature>
<feature type="topological domain" description="Cytoplasmic" evidence="2">
    <location>
        <begin position="1"/>
        <end position="226"/>
    </location>
</feature>
<feature type="transmembrane region" description="Helical; Anchor for type IV membrane protein" evidence="2">
    <location>
        <begin position="227"/>
        <end position="247"/>
    </location>
</feature>
<feature type="topological domain" description="Lumenal" evidence="2">
    <location>
        <begin position="248"/>
        <end position="259"/>
    </location>
</feature>
<feature type="domain" description="UBC core" evidence="3">
    <location>
        <begin position="12"/>
        <end position="162"/>
    </location>
</feature>
<feature type="active site" description="Glycyl thioester intermediate" evidence="3">
    <location>
        <position position="94"/>
    </location>
</feature>
<feature type="mutagenesis site" description="Loss of catalytic activity. Slows down degradation of misfolded proteins from the ER." evidence="4 5">
    <original>C</original>
    <variation>S</variation>
    <location>
        <position position="94"/>
    </location>
</feature>
<feature type="sequence conflict" description="In Ref. 3; BAC36280." evidence="7" ref="3">
    <original>K</original>
    <variation>T</variation>
    <location>
        <position position="25"/>
    </location>
</feature>
<feature type="sequence conflict" description="In Ref. 3; BAC36280." evidence="7" ref="3">
    <original>I</original>
    <variation>M</variation>
    <location>
        <position position="32"/>
    </location>
</feature>
<feature type="sequence conflict" description="In Ref. 3; BAC36280." evidence="7" ref="3">
    <original>R</original>
    <variation>G</variation>
    <location>
        <position position="49"/>
    </location>
</feature>
<feature type="sequence conflict" description="In Ref. 3; BAB26835." evidence="7" ref="3">
    <original>M</original>
    <variation>I</variation>
    <location>
        <position position="80"/>
    </location>
</feature>
<feature type="sequence conflict" description="In Ref. 3; BAB26835." evidence="7" ref="3">
    <original>N</original>
    <variation>H</variation>
    <location>
        <position position="84"/>
    </location>
</feature>
<feature type="sequence conflict" description="In Ref. 3; BAB26835." evidence="7" ref="3">
    <original>F</original>
    <variation>I</variation>
    <location>
        <position position="87"/>
    </location>
</feature>
<feature type="sequence conflict" description="In Ref. 3; BAB23421." evidence="7" ref="3">
    <original>E</original>
    <variation>K</variation>
    <location>
        <position position="133"/>
    </location>
</feature>
<feature type="sequence conflict" description="In Ref. 3; BAB26835." evidence="7" ref="3">
    <original>N</original>
    <variation>I</variation>
    <location>
        <position position="150"/>
    </location>
</feature>
<feature type="sequence conflict" description="In Ref. 3; BAC36280." evidence="7" ref="3">
    <original>C</original>
    <variation>G</variation>
    <location>
        <position position="157"/>
    </location>
</feature>
<feature type="sequence conflict" description="In Ref. 3; BAB23421." evidence="7" ref="3">
    <original>E</original>
    <variation>K</variation>
    <location>
        <position position="162"/>
    </location>
</feature>
<feature type="sequence conflict" description="In Ref. 3; BAC36280." evidence="7" ref="3">
    <original>L</original>
    <variation>W</variation>
    <location>
        <position position="186"/>
    </location>
</feature>
<feature type="sequence conflict" description="In Ref. 2; AAF21504." evidence="7" ref="2">
    <original>AG</original>
    <variation>GW</variation>
    <location>
        <begin position="217"/>
        <end position="218"/>
    </location>
</feature>
<feature type="sequence conflict" description="In Ref. 3; BAC36280." evidence="7" ref="3">
    <original>F</original>
    <variation>L</variation>
    <location>
        <position position="237"/>
    </location>
</feature>
<feature type="sequence conflict" description="In Ref. 1; AAK52607." evidence="7" ref="1">
    <original>A</original>
    <variation>P</variation>
    <location>
        <position position="246"/>
    </location>
</feature>
<organism>
    <name type="scientific">Mus musculus</name>
    <name type="common">Mouse</name>
    <dbReference type="NCBI Taxonomy" id="10090"/>
    <lineage>
        <taxon>Eukaryota</taxon>
        <taxon>Metazoa</taxon>
        <taxon>Chordata</taxon>
        <taxon>Craniata</taxon>
        <taxon>Vertebrata</taxon>
        <taxon>Euteleostomi</taxon>
        <taxon>Mammalia</taxon>
        <taxon>Eutheria</taxon>
        <taxon>Euarchontoglires</taxon>
        <taxon>Glires</taxon>
        <taxon>Rodentia</taxon>
        <taxon>Myomorpha</taxon>
        <taxon>Muroidea</taxon>
        <taxon>Muridae</taxon>
        <taxon>Murinae</taxon>
        <taxon>Mus</taxon>
        <taxon>Mus</taxon>
    </lineage>
</organism>
<evidence type="ECO:0000250" key="1">
    <source>
        <dbReference type="UniProtKB" id="Q8N2K1"/>
    </source>
</evidence>
<evidence type="ECO:0000255" key="2"/>
<evidence type="ECO:0000255" key="3">
    <source>
        <dbReference type="PROSITE-ProRule" id="PRU00388"/>
    </source>
</evidence>
<evidence type="ECO:0000269" key="4">
    <source>
    </source>
</evidence>
<evidence type="ECO:0000269" key="5">
    <source>
    </source>
</evidence>
<evidence type="ECO:0000269" key="6">
    <source>
    </source>
</evidence>
<evidence type="ECO:0000305" key="7"/>
<sequence>MSNNSNKRAPTTATQRLKQDYLRIKKDPVPYICAEPLPSNILEWHYVVRGPEMTPYEGGYYHGKLIFPREFPFKPPSIYMITPNGRFKCNTRLCLSITDFHPDTWNPAWSVSTILTGLLSFMVEKGPTLGSIETSDFTKKQLAAQSLVFNLKDKVFCELFPEVVEEIKQKQKAQDELSNRPQNLPLPDVVPDGELHRGQHGIQLLNGHAPAAGPNLAGLPQANRHHGLLGGALANLFVIVGFAAFAYTVKYVLRSIAQE</sequence>
<gene>
    <name type="primary">Ube2j2</name>
    <name type="synonym">Ncube2</name>
</gene>
<reference key="1">
    <citation type="journal article" date="2001" name="J. Biol. Chem.">
        <title>Endoplasmic reticulum (ER)-associated degradation of T cell receptor subunits. Involvement of ER-associated ubiquitin-conjugating enzymes (E2s).</title>
        <authorList>
            <person name="Tiwari S."/>
            <person name="Weissman A.M."/>
        </authorList>
    </citation>
    <scope>NUCLEOTIDE SEQUENCE [MRNA]</scope>
    <scope>FUNCTION</scope>
    <scope>MUTAGENESIS OF CYS-94</scope>
    <scope>SUBCELLULAR LOCATION</scope>
    <source>
        <strain>C57BL/6J</strain>
        <tissue>Fetus</tissue>
    </source>
</reference>
<reference key="2">
    <citation type="journal article" date="2002" name="J. Cell Sci.">
        <title>A role for mammalian Ubc6 homologues in ER-associated protein degradation.</title>
        <authorList>
            <person name="Lenk U."/>
            <person name="Yu H."/>
            <person name="Walter J."/>
            <person name="Gelman M.S."/>
            <person name="Hartmann E."/>
            <person name="Kopito R.R."/>
            <person name="Sommer T."/>
        </authorList>
    </citation>
    <scope>NUCLEOTIDE SEQUENCE [MRNA]</scope>
    <scope>FUNCTION</scope>
    <scope>MUTAGENESIS OF CYS-94</scope>
    <scope>SUBCELLULAR LOCATION</scope>
</reference>
<reference key="3">
    <citation type="journal article" date="2005" name="Science">
        <title>The transcriptional landscape of the mammalian genome.</title>
        <authorList>
            <person name="Carninci P."/>
            <person name="Kasukawa T."/>
            <person name="Katayama S."/>
            <person name="Gough J."/>
            <person name="Frith M.C."/>
            <person name="Maeda N."/>
            <person name="Oyama R."/>
            <person name="Ravasi T."/>
            <person name="Lenhard B."/>
            <person name="Wells C."/>
            <person name="Kodzius R."/>
            <person name="Shimokawa K."/>
            <person name="Bajic V.B."/>
            <person name="Brenner S.E."/>
            <person name="Batalov S."/>
            <person name="Forrest A.R."/>
            <person name="Zavolan M."/>
            <person name="Davis M.J."/>
            <person name="Wilming L.G."/>
            <person name="Aidinis V."/>
            <person name="Allen J.E."/>
            <person name="Ambesi-Impiombato A."/>
            <person name="Apweiler R."/>
            <person name="Aturaliya R.N."/>
            <person name="Bailey T.L."/>
            <person name="Bansal M."/>
            <person name="Baxter L."/>
            <person name="Beisel K.W."/>
            <person name="Bersano T."/>
            <person name="Bono H."/>
            <person name="Chalk A.M."/>
            <person name="Chiu K.P."/>
            <person name="Choudhary V."/>
            <person name="Christoffels A."/>
            <person name="Clutterbuck D.R."/>
            <person name="Crowe M.L."/>
            <person name="Dalla E."/>
            <person name="Dalrymple B.P."/>
            <person name="de Bono B."/>
            <person name="Della Gatta G."/>
            <person name="di Bernardo D."/>
            <person name="Down T."/>
            <person name="Engstrom P."/>
            <person name="Fagiolini M."/>
            <person name="Faulkner G."/>
            <person name="Fletcher C.F."/>
            <person name="Fukushima T."/>
            <person name="Furuno M."/>
            <person name="Futaki S."/>
            <person name="Gariboldi M."/>
            <person name="Georgii-Hemming P."/>
            <person name="Gingeras T.R."/>
            <person name="Gojobori T."/>
            <person name="Green R.E."/>
            <person name="Gustincich S."/>
            <person name="Harbers M."/>
            <person name="Hayashi Y."/>
            <person name="Hensch T.K."/>
            <person name="Hirokawa N."/>
            <person name="Hill D."/>
            <person name="Huminiecki L."/>
            <person name="Iacono M."/>
            <person name="Ikeo K."/>
            <person name="Iwama A."/>
            <person name="Ishikawa T."/>
            <person name="Jakt M."/>
            <person name="Kanapin A."/>
            <person name="Katoh M."/>
            <person name="Kawasawa Y."/>
            <person name="Kelso J."/>
            <person name="Kitamura H."/>
            <person name="Kitano H."/>
            <person name="Kollias G."/>
            <person name="Krishnan S.P."/>
            <person name="Kruger A."/>
            <person name="Kummerfeld S.K."/>
            <person name="Kurochkin I.V."/>
            <person name="Lareau L.F."/>
            <person name="Lazarevic D."/>
            <person name="Lipovich L."/>
            <person name="Liu J."/>
            <person name="Liuni S."/>
            <person name="McWilliam S."/>
            <person name="Madan Babu M."/>
            <person name="Madera M."/>
            <person name="Marchionni L."/>
            <person name="Matsuda H."/>
            <person name="Matsuzawa S."/>
            <person name="Miki H."/>
            <person name="Mignone F."/>
            <person name="Miyake S."/>
            <person name="Morris K."/>
            <person name="Mottagui-Tabar S."/>
            <person name="Mulder N."/>
            <person name="Nakano N."/>
            <person name="Nakauchi H."/>
            <person name="Ng P."/>
            <person name="Nilsson R."/>
            <person name="Nishiguchi S."/>
            <person name="Nishikawa S."/>
            <person name="Nori F."/>
            <person name="Ohara O."/>
            <person name="Okazaki Y."/>
            <person name="Orlando V."/>
            <person name="Pang K.C."/>
            <person name="Pavan W.J."/>
            <person name="Pavesi G."/>
            <person name="Pesole G."/>
            <person name="Petrovsky N."/>
            <person name="Piazza S."/>
            <person name="Reed J."/>
            <person name="Reid J.F."/>
            <person name="Ring B.Z."/>
            <person name="Ringwald M."/>
            <person name="Rost B."/>
            <person name="Ruan Y."/>
            <person name="Salzberg S.L."/>
            <person name="Sandelin A."/>
            <person name="Schneider C."/>
            <person name="Schoenbach C."/>
            <person name="Sekiguchi K."/>
            <person name="Semple C.A."/>
            <person name="Seno S."/>
            <person name="Sessa L."/>
            <person name="Sheng Y."/>
            <person name="Shibata Y."/>
            <person name="Shimada H."/>
            <person name="Shimada K."/>
            <person name="Silva D."/>
            <person name="Sinclair B."/>
            <person name="Sperling S."/>
            <person name="Stupka E."/>
            <person name="Sugiura K."/>
            <person name="Sultana R."/>
            <person name="Takenaka Y."/>
            <person name="Taki K."/>
            <person name="Tammoja K."/>
            <person name="Tan S.L."/>
            <person name="Tang S."/>
            <person name="Taylor M.S."/>
            <person name="Tegner J."/>
            <person name="Teichmann S.A."/>
            <person name="Ueda H.R."/>
            <person name="van Nimwegen E."/>
            <person name="Verardo R."/>
            <person name="Wei C.L."/>
            <person name="Yagi K."/>
            <person name="Yamanishi H."/>
            <person name="Zabarovsky E."/>
            <person name="Zhu S."/>
            <person name="Zimmer A."/>
            <person name="Hide W."/>
            <person name="Bult C."/>
            <person name="Grimmond S.M."/>
            <person name="Teasdale R.D."/>
            <person name="Liu E.T."/>
            <person name="Brusic V."/>
            <person name="Quackenbush J."/>
            <person name="Wahlestedt C."/>
            <person name="Mattick J.S."/>
            <person name="Hume D.A."/>
            <person name="Kai C."/>
            <person name="Sasaki D."/>
            <person name="Tomaru Y."/>
            <person name="Fukuda S."/>
            <person name="Kanamori-Katayama M."/>
            <person name="Suzuki M."/>
            <person name="Aoki J."/>
            <person name="Arakawa T."/>
            <person name="Iida J."/>
            <person name="Imamura K."/>
            <person name="Itoh M."/>
            <person name="Kato T."/>
            <person name="Kawaji H."/>
            <person name="Kawagashira N."/>
            <person name="Kawashima T."/>
            <person name="Kojima M."/>
            <person name="Kondo S."/>
            <person name="Konno H."/>
            <person name="Nakano K."/>
            <person name="Ninomiya N."/>
            <person name="Nishio T."/>
            <person name="Okada M."/>
            <person name="Plessy C."/>
            <person name="Shibata K."/>
            <person name="Shiraki T."/>
            <person name="Suzuki S."/>
            <person name="Tagami M."/>
            <person name="Waki K."/>
            <person name="Watahiki A."/>
            <person name="Okamura-Oho Y."/>
            <person name="Suzuki H."/>
            <person name="Kawai J."/>
            <person name="Hayashizaki Y."/>
        </authorList>
    </citation>
    <scope>NUCLEOTIDE SEQUENCE [LARGE SCALE MRNA]</scope>
    <source>
        <strain>C57BL/6J</strain>
        <tissue>Lung</tissue>
        <tissue>Skin</tissue>
    </source>
</reference>
<reference key="4">
    <citation type="journal article" date="2004" name="Genome Res.">
        <title>The status, quality, and expansion of the NIH full-length cDNA project: the Mammalian Gene Collection (MGC).</title>
        <authorList>
            <consortium name="The MGC Project Team"/>
        </authorList>
    </citation>
    <scope>NUCLEOTIDE SEQUENCE [LARGE SCALE MRNA]</scope>
    <source>
        <strain>C57BL/6J</strain>
        <tissue>Thymus</tissue>
    </source>
</reference>
<reference key="5">
    <citation type="journal article" date="2009" name="J. Cell Biol.">
        <title>Ube2j2 ubiquitinates hydroxylated amino acids on ER-associated degradation substrates.</title>
        <authorList>
            <person name="Wang X."/>
            <person name="Herr R.A."/>
            <person name="Rabelink M."/>
            <person name="Hoeben R.C."/>
            <person name="Wiertz E.J."/>
            <person name="Hansen T.H."/>
        </authorList>
    </citation>
    <scope>FUNCTION IN CASE OF INFECTION BY THE MURID HERPESVIRUS 4</scope>
    <scope>INTERACTION WITH MURID HERPESVIRUS 4 K3</scope>
</reference>
<reference key="6">
    <citation type="journal article" date="2010" name="Cell">
        <title>A tissue-specific atlas of mouse protein phosphorylation and expression.</title>
        <authorList>
            <person name="Huttlin E.L."/>
            <person name="Jedrychowski M.P."/>
            <person name="Elias J.E."/>
            <person name="Goswami T."/>
            <person name="Rad R."/>
            <person name="Beausoleil S.A."/>
            <person name="Villen J."/>
            <person name="Haas W."/>
            <person name="Sowa M.E."/>
            <person name="Gygi S.P."/>
        </authorList>
    </citation>
    <scope>IDENTIFICATION BY MASS SPECTROMETRY [LARGE SCALE ANALYSIS]</scope>
    <source>
        <tissue>Testis</tissue>
    </source>
</reference>
<dbReference type="EC" id="2.3.2.23"/>
<dbReference type="EMBL" id="AF296656">
    <property type="protein sequence ID" value="AAK52607.1"/>
    <property type="molecule type" value="mRNA"/>
</dbReference>
<dbReference type="EMBL" id="U93242">
    <property type="protein sequence ID" value="AAF21504.1"/>
    <property type="molecule type" value="mRNA"/>
</dbReference>
<dbReference type="EMBL" id="AK004626">
    <property type="protein sequence ID" value="BAB23421.1"/>
    <property type="molecule type" value="mRNA"/>
</dbReference>
<dbReference type="EMBL" id="AK010302">
    <property type="protein sequence ID" value="BAB26835.1"/>
    <property type="molecule type" value="mRNA"/>
</dbReference>
<dbReference type="EMBL" id="AK076265">
    <property type="protein sequence ID" value="BAC36280.1"/>
    <property type="molecule type" value="mRNA"/>
</dbReference>
<dbReference type="EMBL" id="BC065779">
    <property type="protein sequence ID" value="AAH65779.1"/>
    <property type="molecule type" value="mRNA"/>
</dbReference>
<dbReference type="CCDS" id="CCDS19051.1"/>
<dbReference type="RefSeq" id="NP_001034246.1">
    <property type="nucleotide sequence ID" value="NM_001039157.2"/>
</dbReference>
<dbReference type="RefSeq" id="NP_001034247.1">
    <property type="nucleotide sequence ID" value="NM_001039158.2"/>
</dbReference>
<dbReference type="RefSeq" id="NP_001034248.1">
    <property type="nucleotide sequence ID" value="NM_001039159.2"/>
</dbReference>
<dbReference type="RefSeq" id="NP_001271241.1">
    <property type="nucleotide sequence ID" value="NM_001284312.1"/>
</dbReference>
<dbReference type="RefSeq" id="NP_001271243.1">
    <property type="nucleotide sequence ID" value="NM_001284314.1"/>
</dbReference>
<dbReference type="RefSeq" id="NP_067377.4">
    <property type="nucleotide sequence ID" value="NM_021402.6"/>
</dbReference>
<dbReference type="SMR" id="Q6P073"/>
<dbReference type="BioGRID" id="228272">
    <property type="interactions" value="3"/>
</dbReference>
<dbReference type="FunCoup" id="Q6P073">
    <property type="interactions" value="3553"/>
</dbReference>
<dbReference type="STRING" id="10090.ENSMUSP00000024056"/>
<dbReference type="GlyGen" id="Q6P073">
    <property type="glycosylation" value="1 site, 1 N-linked glycan (1 site)"/>
</dbReference>
<dbReference type="PhosphoSitePlus" id="Q6P073"/>
<dbReference type="PaxDb" id="10090-ENSMUSP00000024056"/>
<dbReference type="ProteomicsDB" id="298166"/>
<dbReference type="Pumba" id="Q6P073"/>
<dbReference type="Antibodypedia" id="26182">
    <property type="antibodies" value="138 antibodies from 25 providers"/>
</dbReference>
<dbReference type="DNASU" id="140499"/>
<dbReference type="Ensembl" id="ENSMUST00000103175.8">
    <property type="protein sequence ID" value="ENSMUSP00000099464.2"/>
    <property type="gene ID" value="ENSMUSG00000023286.17"/>
</dbReference>
<dbReference type="Ensembl" id="ENSMUST00000105581.5">
    <property type="protein sequence ID" value="ENSMUSP00000101206.4"/>
    <property type="gene ID" value="ENSMUSG00000023286.17"/>
</dbReference>
<dbReference type="Ensembl" id="ENSMUST00000166489.8">
    <property type="protein sequence ID" value="ENSMUSP00000127712.2"/>
    <property type="gene ID" value="ENSMUSG00000023286.17"/>
</dbReference>
<dbReference type="GeneID" id="140499"/>
<dbReference type="KEGG" id="mmu:140499"/>
<dbReference type="UCSC" id="uc007ubh.1">
    <property type="organism name" value="mouse"/>
</dbReference>
<dbReference type="AGR" id="MGI:2153608"/>
<dbReference type="CTD" id="118424"/>
<dbReference type="MGI" id="MGI:2153608">
    <property type="gene designation" value="Ube2j2"/>
</dbReference>
<dbReference type="VEuPathDB" id="HostDB:ENSMUSG00000023286"/>
<dbReference type="eggNOG" id="KOG0894">
    <property type="taxonomic scope" value="Eukaryota"/>
</dbReference>
<dbReference type="GeneTree" id="ENSGT00940000156173"/>
<dbReference type="InParanoid" id="Q6P073"/>
<dbReference type="OMA" id="GWSVATI"/>
<dbReference type="OrthoDB" id="1158011at2759"/>
<dbReference type="Reactome" id="R-MMU-9609523">
    <property type="pathway name" value="Insertion of tail-anchored proteins into the endoplasmic reticulum membrane"/>
</dbReference>
<dbReference type="Reactome" id="R-MMU-983168">
    <property type="pathway name" value="Antigen processing: Ubiquitination &amp; Proteasome degradation"/>
</dbReference>
<dbReference type="UniPathway" id="UPA00143"/>
<dbReference type="BioGRID-ORCS" id="140499">
    <property type="hits" value="3 hits in 79 CRISPR screens"/>
</dbReference>
<dbReference type="ChiTaRS" id="Ube2j2">
    <property type="organism name" value="mouse"/>
</dbReference>
<dbReference type="PRO" id="PR:Q6P073"/>
<dbReference type="Proteomes" id="UP000000589">
    <property type="component" value="Chromosome 4"/>
</dbReference>
<dbReference type="RNAct" id="Q6P073">
    <property type="molecule type" value="protein"/>
</dbReference>
<dbReference type="Bgee" id="ENSMUSG00000023286">
    <property type="expression patterns" value="Expressed in spermatocyte and 68 other cell types or tissues"/>
</dbReference>
<dbReference type="ExpressionAtlas" id="Q6P073">
    <property type="expression patterns" value="baseline and differential"/>
</dbReference>
<dbReference type="GO" id="GO:0005783">
    <property type="term" value="C:endoplasmic reticulum"/>
    <property type="evidence" value="ECO:0000314"/>
    <property type="project" value="MGI"/>
</dbReference>
<dbReference type="GO" id="GO:0005789">
    <property type="term" value="C:endoplasmic reticulum membrane"/>
    <property type="evidence" value="ECO:0007669"/>
    <property type="project" value="UniProtKB-SubCell"/>
</dbReference>
<dbReference type="GO" id="GO:0000151">
    <property type="term" value="C:ubiquitin ligase complex"/>
    <property type="evidence" value="ECO:0007669"/>
    <property type="project" value="Ensembl"/>
</dbReference>
<dbReference type="GO" id="GO:0005524">
    <property type="term" value="F:ATP binding"/>
    <property type="evidence" value="ECO:0007669"/>
    <property type="project" value="UniProtKB-KW"/>
</dbReference>
<dbReference type="GO" id="GO:0061631">
    <property type="term" value="F:ubiquitin conjugating enzyme activity"/>
    <property type="evidence" value="ECO:0000250"/>
    <property type="project" value="UniProtKB"/>
</dbReference>
<dbReference type="GO" id="GO:0031625">
    <property type="term" value="F:ubiquitin protein ligase binding"/>
    <property type="evidence" value="ECO:0007669"/>
    <property type="project" value="Ensembl"/>
</dbReference>
<dbReference type="GO" id="GO:0036503">
    <property type="term" value="P:ERAD pathway"/>
    <property type="evidence" value="ECO:0007669"/>
    <property type="project" value="Ensembl"/>
</dbReference>
<dbReference type="GO" id="GO:0085020">
    <property type="term" value="P:protein K6-linked ubiquitination"/>
    <property type="evidence" value="ECO:0000250"/>
    <property type="project" value="UniProtKB"/>
</dbReference>
<dbReference type="GO" id="GO:0006986">
    <property type="term" value="P:response to unfolded protein"/>
    <property type="evidence" value="ECO:0007669"/>
    <property type="project" value="UniProtKB-KW"/>
</dbReference>
<dbReference type="GO" id="GO:0006511">
    <property type="term" value="P:ubiquitin-dependent protein catabolic process"/>
    <property type="evidence" value="ECO:0007669"/>
    <property type="project" value="Ensembl"/>
</dbReference>
<dbReference type="CDD" id="cd23799">
    <property type="entry name" value="UBCc_UBE2J"/>
    <property type="match status" value="1"/>
</dbReference>
<dbReference type="FunFam" id="3.10.110.10:FF:000023">
    <property type="entry name" value="Ubiquitin-conjugating enzyme E2 J2"/>
    <property type="match status" value="1"/>
</dbReference>
<dbReference type="Gene3D" id="3.10.110.10">
    <property type="entry name" value="Ubiquitin Conjugating Enzyme"/>
    <property type="match status" value="1"/>
</dbReference>
<dbReference type="InterPro" id="IPR050113">
    <property type="entry name" value="Ub_conjugating_enzyme"/>
</dbReference>
<dbReference type="InterPro" id="IPR000608">
    <property type="entry name" value="UBQ-conjugat_E2_core"/>
</dbReference>
<dbReference type="InterPro" id="IPR016135">
    <property type="entry name" value="UBQ-conjugating_enzyme/RWD"/>
</dbReference>
<dbReference type="PANTHER" id="PTHR24067">
    <property type="entry name" value="UBIQUITIN-CONJUGATING ENZYME E2"/>
    <property type="match status" value="1"/>
</dbReference>
<dbReference type="Pfam" id="PF00179">
    <property type="entry name" value="UQ_con"/>
    <property type="match status" value="1"/>
</dbReference>
<dbReference type="SMART" id="SM00212">
    <property type="entry name" value="UBCc"/>
    <property type="match status" value="1"/>
</dbReference>
<dbReference type="SUPFAM" id="SSF54495">
    <property type="entry name" value="UBC-like"/>
    <property type="match status" value="1"/>
</dbReference>
<dbReference type="PROSITE" id="PS50127">
    <property type="entry name" value="UBC_2"/>
    <property type="match status" value="1"/>
</dbReference>
<accession>Q6P073</accession>
<accession>Q8C6A1</accession>
<accession>Q91Y64</accession>
<accession>Q9CWY5</accession>
<accession>Q9DC18</accession>
<accession>Q9QX58</accession>
<keyword id="KW-0067">ATP-binding</keyword>
<keyword id="KW-0256">Endoplasmic reticulum</keyword>
<keyword id="KW-0472">Membrane</keyword>
<keyword id="KW-0547">Nucleotide-binding</keyword>
<keyword id="KW-1185">Reference proteome</keyword>
<keyword id="KW-0808">Transferase</keyword>
<keyword id="KW-0812">Transmembrane</keyword>
<keyword id="KW-1133">Transmembrane helix</keyword>
<keyword id="KW-0833">Ubl conjugation pathway</keyword>
<keyword id="KW-0834">Unfolded protein response</keyword>
<name>UB2J2_MOUSE</name>